<sequence>MWWWRRRFWRPKRRWRWRRRRRRPLARRRRRPARLARRPRVRRRRFQWGRPRRYRPRRRRRRRKRQKIKLKQWNPAVTKFCRIIGYYPLIICGEGTTVRNYNVHSQDYVQYESYGGGMTTTMFNLKVPYEQFQLHQNFWTRSNIDLDLVRYHSVKFTFFRHPKVDFIVKFNRNPPFTDSVLTGPMLHPGVLMNSKRKILIPSWETRPRGKKRIPVRIGPPRLFTDHWYFQRDFCGVPLLTVNATACNLRYPFGSPQTKNICIYFLVLASIYNDKVSIAKDEVTKNYDTLVDAIKKSPQGLTVFNTFKTQEHMQEPSSETCKETQKTNPPFKYENLSSLWGDKIYKESTFNSFKTNAENLWKARSKHTLLGSKELNFKTGMYSAIFLTNGRLSPDYPGIYIEVVYNPLLGQGEGNMIWLEWCPKKTKQYNERQCYNLIQHVPLWAAIHGYMDFCKKTFKDNNLDKNTRVVLICPYTRPQLYNPQKPDWGYVPYDYNFAQTKMPDGNGYIPEFYRFRWYPSGFHQQNWMNDLDQCGPFSHRGEEKMATLTSKYNFKFTWGGNPIFQQTVKDPCKQSTFDIPGAGGIPRPIQIVNPKYLDPGITFHRWDLRRGFFGPAAVKRMQAESTDALFPTTGPKRPRTEVPVAVAGDALPSRERKRQAWQDSTSEETESEAEAQEEKTLQEQLQQQLKEQRQLRCGIQYMFQQLTKTQLHLHVPPIPQ</sequence>
<name>CAPSD_TTVV4</name>
<dbReference type="EMBL" id="AF435014">
    <property type="protein sequence ID" value="AAL28134.1"/>
    <property type="molecule type" value="Genomic_DNA"/>
</dbReference>
<dbReference type="RefSeq" id="YP_003587909.1">
    <property type="nucleotide sequence ID" value="NC_014094.1"/>
</dbReference>
<dbReference type="SMR" id="Q914N0"/>
<dbReference type="GeneID" id="9086552"/>
<dbReference type="KEGG" id="vg:9086552"/>
<dbReference type="OrthoDB" id="3295at10239"/>
<dbReference type="Proteomes" id="UP000008258">
    <property type="component" value="Genome"/>
</dbReference>
<dbReference type="GO" id="GO:0039615">
    <property type="term" value="C:T=1 icosahedral viral capsid"/>
    <property type="evidence" value="ECO:0007669"/>
    <property type="project" value="UniProtKB-KW"/>
</dbReference>
<dbReference type="InterPro" id="IPR004219">
    <property type="entry name" value="TTvirus_Unk"/>
</dbReference>
<dbReference type="Pfam" id="PF02956">
    <property type="entry name" value="TT_ORF1"/>
    <property type="match status" value="1"/>
</dbReference>
<gene>
    <name type="ORF">ORF1</name>
</gene>
<comment type="function">
    <text evidence="1">Self assemble to form an icosahedral capsid.</text>
</comment>
<comment type="subcellular location">
    <subcellularLocation>
        <location evidence="3">Virion</location>
    </subcellularLocation>
</comment>
<comment type="similarity">
    <text evidence="3">Belongs to the anelloviridae capsid protein family.</text>
</comment>
<keyword id="KW-0167">Capsid protein</keyword>
<keyword id="KW-1185">Reference proteome</keyword>
<keyword id="KW-1140">T=1 icosahedral capsid protein</keyword>
<keyword id="KW-0946">Virion</keyword>
<organism>
    <name type="scientific">Torque teno virus (isolate Human/Germany/KAV/2001)</name>
    <name type="common">TTV</name>
    <dbReference type="NCBI Taxonomy" id="687345"/>
    <lineage>
        <taxon>Viruses</taxon>
        <taxon>Viruses incertae sedis</taxon>
        <taxon>Anelloviridae</taxon>
        <taxon>Alphatorquevirus</taxon>
        <taxon>Alphatorquevirus homin6</taxon>
    </lineage>
</organism>
<proteinExistence type="inferred from homology"/>
<evidence type="ECO:0000250" key="1"/>
<evidence type="ECO:0000256" key="2">
    <source>
        <dbReference type="SAM" id="MobiDB-lite"/>
    </source>
</evidence>
<evidence type="ECO:0000305" key="3"/>
<reference key="1">
    <citation type="journal article" date="2001" name="Biochem. Biophys. Res. Commun.">
        <title>Isolate KAV: a new genotype of the TT-virus family.</title>
        <authorList>
            <person name="Heller F."/>
            <person name="Zachoval R."/>
            <person name="Koelzer A."/>
            <person name="Nitschko H."/>
            <person name="Froesner G.G."/>
        </authorList>
    </citation>
    <scope>NUCLEOTIDE SEQUENCE [GENOMIC DNA]</scope>
</reference>
<reference key="2">
    <citation type="journal article" date="2007" name="Rev. Med. Virol.">
        <title>Torque teno virus (TTV): current status.</title>
        <authorList>
            <person name="Hino S."/>
            <person name="Miyata H."/>
        </authorList>
    </citation>
    <scope>REVIEW</scope>
</reference>
<protein>
    <recommendedName>
        <fullName>Capsid protein</fullName>
    </recommendedName>
</protein>
<feature type="chain" id="PRO_0000315329" description="Capsid protein">
    <location>
        <begin position="1"/>
        <end position="719"/>
    </location>
</feature>
<feature type="region of interest" description="Disordered" evidence="2">
    <location>
        <begin position="647"/>
        <end position="678"/>
    </location>
</feature>
<feature type="compositionally biased region" description="Acidic residues" evidence="2">
    <location>
        <begin position="664"/>
        <end position="674"/>
    </location>
</feature>
<organismHost>
    <name type="scientific">Homo sapiens</name>
    <name type="common">Human</name>
    <dbReference type="NCBI Taxonomy" id="9606"/>
</organismHost>
<accession>Q914N0</accession>